<protein>
    <recommendedName>
        <fullName>Coiled-coil domain-containing protein 157</fullName>
    </recommendedName>
</protein>
<sequence>MAHLLGSPACMDSLRKDLTDLQGAIVDVFSRAGPVRFPSWKFPDRAACDLDMVALLEHYDHVPGDPEFTQLAHAVLLELVIDRLLLLLQSCASYLENLTLEQIVPPARAAGPCMSVGLTVRRFWNSLLRLGMLSQQAALQKRANQGETLTSKPTAKGEPAGSRELGTAQLVKPPSPVPGLPQACPERDSLPVSVSLRRPGGTAENTRSVHSQTIETALVPCDACTSVQSSLREVGKVVINLCQSQNLPSSLGRFQQLVRDSMGHRPLPAATVGLWAAEQSKDLACLGKLVGLLRAQLEEAEGQKDRLRMQVGELEQALQEEQAARQRQAQEAEQHRAQWERERQQLLAETSDLKTKVATLEGELKQQRESTQAVESKAQQLQAEAEHRLEAERQVQHLEQQVELLAGRLDGASQQIRWASTELDKEKARVDSMVRHQESLQAKQRALLQQLDSLDQEREELRGSLDEAEAQRAHVEEQLQSVQGEREQATTDLRLTISELERELVELRERERLLVAFPDLHRPAEAQIQSSGNVTDDMERQVQANDIRIRVLQEENGRLRSMLSKIREVAQQGGLKLIPEDQLWALRSKGIQGAEPPLQTARTSPGAPGRRHLPGSRPASAGRTLPGQPQASPPLRPHRRPGESSPEDATYLTNCAQSPIRALARLRRRLSPSSGRASPAHQPQERPT</sequence>
<name>CC157_BOVIN</name>
<accession>A4IFI1</accession>
<dbReference type="EMBL" id="BC134591">
    <property type="protein sequence ID" value="AAI34592.1"/>
    <property type="status" value="ALT_INIT"/>
    <property type="molecule type" value="mRNA"/>
</dbReference>
<dbReference type="RefSeq" id="NP_001096803.2">
    <property type="nucleotide sequence ID" value="NM_001103333.2"/>
</dbReference>
<dbReference type="SMR" id="A4IFI1"/>
<dbReference type="FunCoup" id="A4IFI1">
    <property type="interactions" value="456"/>
</dbReference>
<dbReference type="STRING" id="9913.ENSBTAP00000065752"/>
<dbReference type="PaxDb" id="9913-ENSBTAP00000002776"/>
<dbReference type="GeneID" id="100125300"/>
<dbReference type="KEGG" id="bta:100125300"/>
<dbReference type="CTD" id="550631"/>
<dbReference type="eggNOG" id="ENOG502QPW2">
    <property type="taxonomic scope" value="Eukaryota"/>
</dbReference>
<dbReference type="InParanoid" id="A4IFI1"/>
<dbReference type="OrthoDB" id="10051906at2759"/>
<dbReference type="Proteomes" id="UP000009136">
    <property type="component" value="Unplaced"/>
</dbReference>
<dbReference type="Gene3D" id="1.10.287.1490">
    <property type="match status" value="1"/>
</dbReference>
<dbReference type="InterPro" id="IPR029681">
    <property type="entry name" value="CCDC157"/>
</dbReference>
<dbReference type="PANTHER" id="PTHR43696">
    <property type="entry name" value="COILED-COIL DOMAIN-CONTAINING PROTEIN 157"/>
    <property type="match status" value="1"/>
</dbReference>
<dbReference type="PANTHER" id="PTHR43696:SF9">
    <property type="entry name" value="COILED-COIL DOMAIN-CONTAINING PROTEIN 157"/>
    <property type="match status" value="1"/>
</dbReference>
<proteinExistence type="evidence at transcript level"/>
<reference key="1">
    <citation type="submission" date="2007-03" db="EMBL/GenBank/DDBJ databases">
        <authorList>
            <consortium name="NIH - Mammalian Gene Collection (MGC) project"/>
        </authorList>
    </citation>
    <scope>NUCLEOTIDE SEQUENCE [LARGE SCALE MRNA]</scope>
    <source>
        <strain>Hereford</strain>
        <tissue>Hypothalamus</tissue>
    </source>
</reference>
<organism>
    <name type="scientific">Bos taurus</name>
    <name type="common">Bovine</name>
    <dbReference type="NCBI Taxonomy" id="9913"/>
    <lineage>
        <taxon>Eukaryota</taxon>
        <taxon>Metazoa</taxon>
        <taxon>Chordata</taxon>
        <taxon>Craniata</taxon>
        <taxon>Vertebrata</taxon>
        <taxon>Euteleostomi</taxon>
        <taxon>Mammalia</taxon>
        <taxon>Eutheria</taxon>
        <taxon>Laurasiatheria</taxon>
        <taxon>Artiodactyla</taxon>
        <taxon>Ruminantia</taxon>
        <taxon>Pecora</taxon>
        <taxon>Bovidae</taxon>
        <taxon>Bovinae</taxon>
        <taxon>Bos</taxon>
    </lineage>
</organism>
<feature type="chain" id="PRO_0000319419" description="Coiled-coil domain-containing protein 157">
    <location>
        <begin position="1"/>
        <end position="688"/>
    </location>
</feature>
<feature type="region of interest" description="Disordered" evidence="2">
    <location>
        <begin position="143"/>
        <end position="162"/>
    </location>
</feature>
<feature type="region of interest" description="Disordered" evidence="2">
    <location>
        <begin position="168"/>
        <end position="189"/>
    </location>
</feature>
<feature type="region of interest" description="Disordered" evidence="2">
    <location>
        <begin position="322"/>
        <end position="341"/>
    </location>
</feature>
<feature type="region of interest" description="Disordered" evidence="2">
    <location>
        <begin position="366"/>
        <end position="385"/>
    </location>
</feature>
<feature type="region of interest" description="Disordered" evidence="2">
    <location>
        <begin position="592"/>
        <end position="688"/>
    </location>
</feature>
<feature type="coiled-coil region" evidence="1">
    <location>
        <begin position="288"/>
        <end position="572"/>
    </location>
</feature>
<feature type="compositionally biased region" description="Polar residues" evidence="2">
    <location>
        <begin position="143"/>
        <end position="153"/>
    </location>
</feature>
<feature type="compositionally biased region" description="Polar residues" evidence="2">
    <location>
        <begin position="369"/>
        <end position="382"/>
    </location>
</feature>
<feature type="compositionally biased region" description="Low complexity" evidence="2">
    <location>
        <begin position="671"/>
        <end position="680"/>
    </location>
</feature>
<comment type="sequence caution" evidence="3">
    <conflict type="erroneous initiation">
        <sequence resource="EMBL-CDS" id="AAI34592"/>
    </conflict>
</comment>
<gene>
    <name type="primary">CCDC157</name>
</gene>
<keyword id="KW-0175">Coiled coil</keyword>
<keyword id="KW-1185">Reference proteome</keyword>
<evidence type="ECO:0000255" key="1"/>
<evidence type="ECO:0000256" key="2">
    <source>
        <dbReference type="SAM" id="MobiDB-lite"/>
    </source>
</evidence>
<evidence type="ECO:0000305" key="3"/>